<comment type="function">
    <molecule>Envelope glycoprotein</molecule>
    <text evidence="3">Trimeric GP1,2 complexes form the virion surface spikes and mediate the viral entry processes, with GP1 acting as the receptor-binding subunit and GP2 as the membrane fusion subunit. At later times of infection, down-regulates the expression of various host cell surface molecules that are essential for immune surveillance and cell adhesion. Down-modulates several integrins including ITGA1, ITGA2, ITGA3, ITGA4, ITGA5, ITGA6, ITGAV and ITGB1. This decrease in cell adhesion molecules may lead to cell detachment, contributing to the disruption of blood vessel integrity and hemorrhages developed during infection (cytotoxicity). Interacts with host TLR4 and thereby stimulates the differentiation and activation of monocytes leading to bystander death of T-lymphocytes. Down-regulates as well the function of host natural killer cells. Counteracts the antiviral effect of host BST2/tetherin that restricts release of progeny virions from infected cells. However, cooperates with VP40 and host BST2 to activate canonical NF-kappa-B pathway in a manner dependent on neddylation.</text>
</comment>
<comment type="function">
    <molecule>Shed GP</molecule>
    <text evidence="3">Functions as a decoy for anti-GP1,2 antibodies thereby contributing to viral immune evasion. Interacts and activates host macrophages and dendritic cells inducing up-regulation of cytokine transcription. This effect is mediated throught activation of host TLR4.</text>
</comment>
<comment type="function">
    <molecule>GP1</molecule>
    <text evidence="2 3 4">Responsible for binding to the receptor(s) on target cells. Interacts with CD209/DC-SIGN and CLEC4M/DC-SIGNR which act as cofactors for virus entry into dendritic cells (DCs) and endothelial cells (By similarity). Binding to the macrophage specific lectin CLEC10A also seems to enhance virus infectivity (By similarity). Interaction with FOLR1/folate receptor alpha may be a cofactor for virus entry in some cell types, although results are contradictory (By similarity). Members of the Tyro3 receptor tyrosine kinase family also seem to be cell entry factors in filovirus infection (By similarity). Once attached, the virions are internalized through clathrin-dependent endocytosis and/or macropinocytosis. After internalization of the virus into the endosomes of the host cell, proteolysis of GP1 by two cysteine proteases, CTSB/cathepsin B and CTSL/cathepsin L removes the glycan cap and allows GP1 binding to the host entry receptor NPC1. NPC1-binding, Ca(2+) and acidic pH induce a conformational change of GP2, which unmasks its fusion peptide and permit membranes fusion (By similarity).</text>
</comment>
<comment type="function">
    <molecule>GP2</molecule>
    <text evidence="3">Acts as a class I viral fusion protein. Under the current model, the protein has at least 3 conformational states: pre-fusion native state, pre-hairpin intermediate state, and post-fusion hairpin state. During viral and target cell membrane fusion, the coiled coil regions (heptad repeats) assume a trimer-of-hairpins structure, positioning the fusion peptide in close proximity to the C-terminal region of the ectodomain. The formation of this structure appears to drive apposition and subsequent fusion of viral and target cell membranes. Responsible for penetration of the virus into the cell cytoplasm by mediating the fusion of the membrane of the endocytosed virus particle with the endosomal membrane. Low pH in endosomes induces an irreversible conformational change in GP2, releasing the fusion hydrophobic peptide.</text>
</comment>
<comment type="subunit">
    <molecule>Envelope glycoprotein</molecule>
    <text evidence="3">Homotrimer; each monomer consists of a GP1 and a GP2 subunit linked by disulfide bonds. The resulting peplomers (GP1,2) protrude from the virus surface as spikes. Interacts with host integrin alpha-V/ITGAV. Interacts with host CLEC10A. Binds also to host CD209 and CLEC4M/DC-SIGN(R). Interacts with host FOLR1. Interacts with BST2; this interaction inhibits the antiviral effect of BST2 and this allows viral release from infected cells. Interacts with host FCN1; this interaction enhances viral entry. Interacts with host TLR4; this interaction induces cell death in T-lymphocytes or proinflammatory cytokines and SOCS1 production in monocytes.</text>
</comment>
<comment type="subunit">
    <molecule>GP1</molecule>
    <text evidence="3">Interacts with host entry receptor NPC1.</text>
</comment>
<comment type="subunit">
    <molecule>Shed GP</molecule>
    <text evidence="3">GP1 and GP2delta are part of GP1,2delta soluble complexes released by ectodomain shedding.</text>
</comment>
<comment type="interaction">
    <interactant intactId="EBI-22015020">
        <id>P87666</id>
    </interactant>
    <interactant intactId="EBI-2368710">
        <id>O15118</id>
        <label>NPC1</label>
    </interactant>
    <organismsDiffer>true</organismsDiffer>
    <experiments>3</experiments>
</comment>
<comment type="subcellular location">
    <molecule>GP2</molecule>
    <subcellularLocation>
        <location evidence="3">Virion membrane</location>
        <topology evidence="5">Single-pass type I membrane protein</topology>
    </subcellularLocation>
    <subcellularLocation>
        <location evidence="3">Host cell membrane</location>
        <topology evidence="5">Single-pass type I membrane protein</topology>
    </subcellularLocation>
    <text evidence="3">In the cell, localizes to the plasma membrane lipid rafts, which probably represent the assembly and budding site.</text>
</comment>
<comment type="subcellular location">
    <molecule>GP1</molecule>
    <subcellularLocation>
        <location evidence="3">Virion membrane</location>
        <topology evidence="3">Peripheral membrane protein</topology>
    </subcellularLocation>
    <subcellularLocation>
        <location evidence="3">Host cell membrane</location>
        <topology evidence="3">Peripheral membrane protein</topology>
    </subcellularLocation>
    <text evidence="3">GP1 is not anchored to the viral envelope, but forms a disulfid-linked complex with the extravirion surface GP2. In the cell, both GP1 and GP2 localize to the plasma membrane lipid rafts, which probably represent the assembly and budding site. GP1 can also be shed after proteolytic processing.</text>
</comment>
<comment type="subcellular location">
    <molecule>Shed GP</molecule>
    <subcellularLocation>
        <location evidence="3">Secreted</location>
    </subcellularLocation>
    <text evidence="3">GP2-delta bound to GP1 (GP1,2-delta) is produced by proteolytic cleavage of GP1,2 by host ADAM17 and shed by the virus.</text>
</comment>
<comment type="domain">
    <text evidence="1">The mucin-like region seems to be involved in the cytotoxic function. This region is also involved in binding to human CLEC10A (By similarity).</text>
</comment>
<comment type="domain">
    <text evidence="1">The coiled coil regions play a role in oligomerization and fusion activity.</text>
</comment>
<comment type="PTM">
    <text evidence="1">The signal peptide region modulates GP's high mannose glycosylation, thereby determining the efficiency of the interactions with DC-SIGN(R).</text>
</comment>
<comment type="PTM">
    <text evidence="1">N-glycosylated.</text>
</comment>
<comment type="PTM">
    <text evidence="1">O-glycosylated in the mucin-like region.</text>
</comment>
<comment type="PTM">
    <text evidence="1">Palmitoylation of GP2 is not required for its function.</text>
</comment>
<comment type="PTM">
    <text evidence="1">Specific enzymatic cleavages in vivo yield mature proteins. The precursor is processed into GP1 and GP2 by host cell furin in the trans Golgi, and maybe by other host proteases, to yield the mature GP1 and GP2 proteins. The cleavage site corresponds to the furin optimal cleavage sequence [KR]-X-[KR]-R. This cleavage does not seem to be required for function. After the internalization of the virus into cell endosomes, GP1 C-terminus is removed by the endosomal proteases cathepsin B, cathepsin L, or both, leaving a 19-kDa N-terminal fragment which is further digested by cathepsin B. Proteolytic processing of GP1,2 by host ADAM17 can remove the transmembrane anchor of GP2 and leads to shedding of complexes consisting in GP1 and truncated GP2 (GP1,2delta) (By similarity).</text>
</comment>
<comment type="RNA editing">
    <location>
        <position position="295" evidence="7"/>
    </location>
    <text>Partially edited. RNA editing at this position consists of an insertion of one or two adenine nucleotides. The sequence displayed here is the full-length transmembrane glycoprotein GP, derived from the +1A edited RNA. The unedited RNA gives rise to the small secreted glycoprotein sGP (AC P60171), the +2A edited RNA gives rise to the super small secreted glycoprotein ssGP (AC P0C773).</text>
</comment>
<comment type="miscellaneous">
    <text evidence="1">Filoviruses entry requires functional lipid rafts at the host cell surface.</text>
</comment>
<comment type="miscellaneous">
    <text>Essential for infectivity, as it is the sole viral protein expressed at the virion surface.</text>
</comment>
<comment type="similarity">
    <text evidence="8">Belongs to the filoviruses glycoprotein family.</text>
</comment>
<organism>
    <name type="scientific">Zaire ebolavirus (strain Kikwit-95)</name>
    <name type="common">ZEBOV</name>
    <name type="synonym">Zaire Ebola virus</name>
    <dbReference type="NCBI Taxonomy" id="128951"/>
    <lineage>
        <taxon>Viruses</taxon>
        <taxon>Riboviria</taxon>
        <taxon>Orthornavirae</taxon>
        <taxon>Negarnaviricota</taxon>
        <taxon>Haploviricotina</taxon>
        <taxon>Monjiviricetes</taxon>
        <taxon>Mononegavirales</taxon>
        <taxon>Filoviridae</taxon>
        <taxon>Orthoebolavirus</taxon>
        <taxon>Orthoebolavirus zairense</taxon>
        <taxon>Zaire ebolavirus</taxon>
    </lineage>
</organism>
<reference key="1">
    <citation type="journal article" date="1996" name="Proc. Natl. Acad. Sci. U.S.A.">
        <title>The virion glycoproteins of Ebola viruses are encoded in two reading frames and are expressed through transcriptional editing.</title>
        <authorList>
            <person name="Sanchez A."/>
            <person name="Trappier S.G."/>
            <person name="Mahy B.W.J."/>
            <person name="Peters C.J."/>
            <person name="Nichol S.T."/>
        </authorList>
    </citation>
    <scope>NUCLEOTIDE SEQUENCE [GENOMIC RNA]</scope>
    <scope>RNA EDITING</scope>
</reference>
<reference key="2">
    <citation type="submission" date="2003-07" db="EMBL/GenBank/DDBJ databases">
        <authorList>
            <person name="Chain P.S.G."/>
            <person name="Ichou M.A."/>
            <person name="Malfatti S.A."/>
            <person name="Hajjaj A."/>
            <person name="Vergez L.M."/>
            <person name="Paragas J."/>
            <person name="Do L.H."/>
            <person name="Jahrling P.B."/>
            <person name="Smith K.L."/>
            <person name="McCready P.M."/>
            <person name="Ibrahim M.S."/>
        </authorList>
    </citation>
    <scope>NUCLEOTIDE SEQUENCE [GENOMIC RNA]</scope>
    <source>
        <strain>Isolate Chain</strain>
    </source>
</reference>
<feature type="signal peptide" evidence="5">
    <location>
        <begin position="1"/>
        <end position="32"/>
    </location>
</feature>
<feature type="chain" id="PRO_0000037482" description="Envelope glycoprotein">
    <location>
        <begin position="33"/>
        <end position="676"/>
    </location>
</feature>
<feature type="chain" id="PRO_0000037483" description="GP1" evidence="1">
    <location>
        <begin position="33"/>
        <end position="501"/>
    </location>
</feature>
<feature type="chain" id="PRO_0000037484" description="GP2" evidence="1">
    <location>
        <begin position="502"/>
        <end position="676"/>
    </location>
</feature>
<feature type="chain" id="PRO_0000245065" description="Shed GP" evidence="1">
    <location>
        <begin position="502"/>
        <end position="637"/>
    </location>
</feature>
<feature type="topological domain" description="Extracellular" evidence="5">
    <location>
        <begin position="33"/>
        <end position="650"/>
    </location>
</feature>
<feature type="transmembrane region" description="Helical" evidence="5">
    <location>
        <begin position="651"/>
        <end position="671"/>
    </location>
</feature>
<feature type="topological domain" description="Cytoplasmic" evidence="5">
    <location>
        <begin position="672"/>
        <end position="676"/>
    </location>
</feature>
<feature type="region of interest" description="Receptor-binding" evidence="1">
    <location>
        <begin position="54"/>
        <end position="201"/>
    </location>
</feature>
<feature type="region of interest" description="Mucin-like region" evidence="1">
    <location>
        <begin position="305"/>
        <end position="485"/>
    </location>
</feature>
<feature type="region of interest" description="Disordered" evidence="6">
    <location>
        <begin position="314"/>
        <end position="337"/>
    </location>
</feature>
<feature type="region of interest" description="Disordered" evidence="6">
    <location>
        <begin position="370"/>
        <end position="478"/>
    </location>
</feature>
<feature type="region of interest" description="Fusion peptide" evidence="1">
    <location>
        <begin position="524"/>
        <end position="539"/>
    </location>
</feature>
<feature type="coiled-coil region" evidence="5">
    <location>
        <begin position="554"/>
        <end position="595"/>
    </location>
</feature>
<feature type="coiled-coil region" evidence="5">
    <location>
        <begin position="615"/>
        <end position="634"/>
    </location>
</feature>
<feature type="compositionally biased region" description="Polar residues" evidence="6">
    <location>
        <begin position="314"/>
        <end position="335"/>
    </location>
</feature>
<feature type="compositionally biased region" description="Low complexity" evidence="6">
    <location>
        <begin position="414"/>
        <end position="427"/>
    </location>
</feature>
<feature type="compositionally biased region" description="Polar residues" evidence="6">
    <location>
        <begin position="447"/>
        <end position="464"/>
    </location>
</feature>
<feature type="site" description="Involved in receptor recognition and/or post-binding events" evidence="5">
    <location>
        <position position="57"/>
    </location>
</feature>
<feature type="site" description="Involved in receptor recognition and/or post-binding events" evidence="5">
    <location>
        <position position="63"/>
    </location>
</feature>
<feature type="site" description="Involved in receptor recognition and/or post-binding events" evidence="5">
    <location>
        <position position="64"/>
    </location>
</feature>
<feature type="site" description="Involved in receptor recognition and/or post-binding events" evidence="5">
    <location>
        <position position="88"/>
    </location>
</feature>
<feature type="site" description="Involved in receptor recognition and/or post-binding events" evidence="5">
    <location>
        <position position="95"/>
    </location>
</feature>
<feature type="site" description="Involved in receptor recognition and/or post-binding events" evidence="5">
    <location>
        <position position="170"/>
    </location>
</feature>
<feature type="site" description="Cleavage; by host furin" evidence="1">
    <location>
        <begin position="501"/>
        <end position="502"/>
    </location>
</feature>
<feature type="site" description="Cleavage; by host ADAM17" evidence="1">
    <location>
        <begin position="637"/>
        <end position="638"/>
    </location>
</feature>
<feature type="lipid moiety-binding region" description="S-palmitoyl cysteine; by host" evidence="3">
    <location>
        <position position="670"/>
    </location>
</feature>
<feature type="lipid moiety-binding region" description="S-palmitoyl cysteine; by host" evidence="3">
    <location>
        <position position="672"/>
    </location>
</feature>
<feature type="glycosylation site" description="N-linked (GlcNAc...) asparagine; by host" evidence="5">
    <location>
        <position position="40"/>
    </location>
</feature>
<feature type="glycosylation site" description="N-linked (GlcNAc...) asparagine; by host" evidence="5">
    <location>
        <position position="204"/>
    </location>
</feature>
<feature type="glycosylation site" description="N-linked (GlcNAc...) asparagine; by host" evidence="5">
    <location>
        <position position="228"/>
    </location>
</feature>
<feature type="glycosylation site" description="N-linked (GlcNAc...) asparagine; by host" evidence="5">
    <location>
        <position position="238"/>
    </location>
</feature>
<feature type="glycosylation site" description="N-linked (GlcNAc...) asparagine; by host" evidence="5">
    <location>
        <position position="257"/>
    </location>
</feature>
<feature type="glycosylation site" description="N-linked (GlcNAc...) asparagine; by host" evidence="5">
    <location>
        <position position="268"/>
    </location>
</feature>
<feature type="glycosylation site" description="N-linked (GlcNAc...) asparagine; by host" evidence="5">
    <location>
        <position position="296"/>
    </location>
</feature>
<feature type="glycosylation site" description="N-linked (GlcNAc...) asparagine; by host" evidence="5">
    <location>
        <position position="317"/>
    </location>
</feature>
<feature type="glycosylation site" description="N-linked (GlcNAc...) asparagine; by host" evidence="5">
    <location>
        <position position="333"/>
    </location>
</feature>
<feature type="glycosylation site" description="N-linked (GlcNAc...) asparagine; by host" evidence="5">
    <location>
        <position position="346"/>
    </location>
</feature>
<feature type="glycosylation site" description="N-linked (GlcNAc...) asparagine; by host" evidence="5">
    <location>
        <position position="386"/>
    </location>
</feature>
<feature type="glycosylation site" description="N-linked (GlcNAc...) asparagine; by host" evidence="5">
    <location>
        <position position="413"/>
    </location>
</feature>
<feature type="glycosylation site" description="N-linked (GlcNAc...) asparagine; by host" evidence="5">
    <location>
        <position position="436"/>
    </location>
</feature>
<feature type="glycosylation site" description="N-linked (GlcNAc...) asparagine; by host" evidence="5">
    <location>
        <position position="454"/>
    </location>
</feature>
<feature type="glycosylation site" description="N-linked (GlcNAc...) asparagine; by host" evidence="5">
    <location>
        <position position="462"/>
    </location>
</feature>
<feature type="glycosylation site" description="N-linked (GlcNAc...) asparagine; by host" evidence="5">
    <location>
        <position position="563"/>
    </location>
</feature>
<feature type="glycosylation site" description="N-linked (GlcNAc...) asparagine; by host" evidence="5">
    <location>
        <position position="618"/>
    </location>
</feature>
<feature type="disulfide bond" description="Interchain (between GP1 and GP2 chains)" evidence="1">
    <location>
        <begin position="53"/>
        <end position="609"/>
    </location>
</feature>
<feature type="disulfide bond" evidence="5">
    <location>
        <begin position="108"/>
        <end position="135"/>
    </location>
</feature>
<feature type="disulfide bond" evidence="5">
    <location>
        <begin position="121"/>
        <end position="147"/>
    </location>
</feature>
<feature type="disulfide bond" evidence="5">
    <location>
        <begin position="511"/>
        <end position="556"/>
    </location>
</feature>
<feature type="disulfide bond" evidence="2">
    <location>
        <begin position="601"/>
        <end position="608"/>
    </location>
</feature>
<feature type="sequence variant" description="In strain: Isolate Chain.">
    <original>D</original>
    <variation>E</variation>
    <location>
        <position position="47"/>
    </location>
</feature>
<feature type="sequence variant" description="In strain: Isolate Chain.">
    <original>L</original>
    <variation>P</variation>
    <location>
        <position position="430"/>
    </location>
</feature>
<feature type="strand" evidence="9">
    <location>
        <begin position="35"/>
        <end position="41"/>
    </location>
</feature>
<feature type="strand" evidence="9">
    <location>
        <begin position="43"/>
        <end position="46"/>
    </location>
</feature>
<feature type="turn" evidence="9">
    <location>
        <begin position="48"/>
        <end position="50"/>
    </location>
</feature>
<feature type="helix" evidence="9">
    <location>
        <begin position="60"/>
        <end position="62"/>
    </location>
</feature>
<feature type="strand" evidence="9">
    <location>
        <begin position="63"/>
        <end position="69"/>
    </location>
</feature>
<feature type="helix" evidence="9">
    <location>
        <begin position="79"/>
        <end position="82"/>
    </location>
</feature>
<feature type="helix" evidence="9">
    <location>
        <begin position="83"/>
        <end position="85"/>
    </location>
</feature>
<feature type="strand" evidence="9">
    <location>
        <begin position="86"/>
        <end position="91"/>
    </location>
</feature>
<feature type="strand" evidence="9">
    <location>
        <begin position="96"/>
        <end position="98"/>
    </location>
</feature>
<feature type="strand" evidence="9">
    <location>
        <begin position="100"/>
        <end position="103"/>
    </location>
</feature>
<feature type="strand" evidence="9">
    <location>
        <begin position="105"/>
        <end position="114"/>
    </location>
</feature>
<feature type="strand" evidence="9">
    <location>
        <begin position="118"/>
        <end position="122"/>
    </location>
</feature>
<feature type="strand" evidence="9">
    <location>
        <begin position="135"/>
        <end position="144"/>
    </location>
</feature>
<feature type="strand" evidence="9">
    <location>
        <begin position="149"/>
        <end position="154"/>
    </location>
</feature>
<feature type="strand" evidence="9">
    <location>
        <begin position="159"/>
        <end position="161"/>
    </location>
</feature>
<feature type="strand" evidence="9">
    <location>
        <begin position="163"/>
        <end position="169"/>
    </location>
</feature>
<feature type="strand" evidence="9">
    <location>
        <begin position="176"/>
        <end position="185"/>
    </location>
</feature>
<feature type="strand" evidence="9">
    <location>
        <begin position="515"/>
        <end position="520"/>
    </location>
</feature>
<feature type="turn" evidence="9">
    <location>
        <begin position="528"/>
        <end position="531"/>
    </location>
</feature>
<feature type="turn" evidence="9">
    <location>
        <begin position="533"/>
        <end position="535"/>
    </location>
</feature>
<feature type="helix" evidence="9">
    <location>
        <begin position="539"/>
        <end position="541"/>
    </location>
</feature>
<feature type="strand" evidence="9">
    <location>
        <begin position="542"/>
        <end position="548"/>
    </location>
</feature>
<feature type="helix" evidence="9">
    <location>
        <begin position="552"/>
        <end position="575"/>
    </location>
</feature>
<feature type="strand" evidence="9">
    <location>
        <begin position="579"/>
        <end position="581"/>
    </location>
</feature>
<feature type="helix" evidence="9">
    <location>
        <begin position="584"/>
        <end position="595"/>
    </location>
</feature>
<feature type="strand" evidence="10">
    <location>
        <begin position="597"/>
        <end position="599"/>
    </location>
</feature>
<feature type="strand" evidence="10">
    <location>
        <begin position="603"/>
        <end position="607"/>
    </location>
</feature>
<feature type="strand" evidence="11">
    <location>
        <begin position="632"/>
        <end position="636"/>
    </location>
</feature>
<feature type="turn" evidence="11">
    <location>
        <begin position="637"/>
        <end position="639"/>
    </location>
</feature>
<feature type="turn" evidence="11">
    <location>
        <begin position="643"/>
        <end position="646"/>
    </location>
</feature>
<feature type="strand" evidence="11">
    <location>
        <begin position="647"/>
        <end position="657"/>
    </location>
</feature>
<feature type="turn" evidence="11">
    <location>
        <begin position="658"/>
        <end position="660"/>
    </location>
</feature>
<feature type="helix" evidence="11">
    <location>
        <begin position="661"/>
        <end position="675"/>
    </location>
</feature>
<proteinExistence type="evidence at protein level"/>
<sequence>MGVTGILQLPRDRFKRTSFFLWVIILFQRTFSIPLGVIHNSTLQVSDVDKLVCRDKLSSTNQLRSVGLNLEGNGVATDVPSATKRWGFRSGVPPKVVNYEAGEWAENCYNLEIKKPDGSECLPAAPDGIRGFPRCRYVHKVSGTGPCAGDFAFHKEGAFFLYDRLASTVIYRGTTFAEGVVAFLILPQAKKDFFSSHPLREPVNATEDPSSGYYSTTIRYQATGFGTNETEYLFEVDNLTYVQLESRFTPQFLLQLNETIYTSGKRSNTTGKLIWKVNPEIDTTIGEWAFWETKKNLTRKIRSEELSFTAVSNRAKNISGQSPARTSSDPGTNTTTEDHKIMASENSSAMVQVHSQGREAAVSHLTTLATISTSPQPPTTKPGPDNSTHNTPVYKLDISEATQVEQHHRRTDNDSTASDTPPATTAAGPLKAENTNTSKGTDLLDPATTTSPQNHSETAGNNNTHHQDTGEESASSGKLGLITNTIAGVAGLITGGRRARREAIVNAQPKCNPNLHYWTTQDEGAAIGLAWIPYFGPAAEGIYTEGLMHNQDGLICGLRQLANETTQALQLFLRATTELRTFSILNRKAIDFLLQRWGGTCHILGPDCCIEPHDWTKNITDKIDQIIHDFVDKTLPDQGDNDNWWTGWRQWIPAGIGVTGVIIAVIALFCICKFVF</sequence>
<dbReference type="EMBL" id="U28077">
    <property type="protein sequence ID" value="AAB37095.1"/>
    <property type="molecule type" value="Genomic_RNA"/>
</dbReference>
<dbReference type="EMBL" id="AY354458">
    <property type="protein sequence ID" value="AAQ55048.1"/>
    <property type="molecule type" value="Genomic_RNA"/>
</dbReference>
<dbReference type="PDB" id="2Y6S">
    <property type="method" value="X-ray"/>
    <property type="resolution" value="2.80 A"/>
    <property type="chains" value="P/Q=477-493"/>
</dbReference>
<dbReference type="PDB" id="5F1B">
    <property type="method" value="X-ray"/>
    <property type="resolution" value="2.30 A"/>
    <property type="chains" value="A=32-188, B=509-632"/>
</dbReference>
<dbReference type="PDB" id="5HJ3">
    <property type="method" value="X-ray"/>
    <property type="resolution" value="3.30 A"/>
    <property type="chains" value="D/H/L/P=502-637"/>
</dbReference>
<dbReference type="PDB" id="5JNX">
    <property type="method" value="EM"/>
    <property type="resolution" value="6.56 A"/>
    <property type="chains" value="C/E/G=32-188, D/F/H=509-632"/>
</dbReference>
<dbReference type="PDB" id="5T42">
    <property type="method" value="NMR"/>
    <property type="chains" value="A=632-676"/>
</dbReference>
<dbReference type="PDB" id="6DZL">
    <property type="method" value="EM"/>
    <property type="resolution" value="4.14 A"/>
    <property type="chains" value="D/E/F=504-629"/>
</dbReference>
<dbReference type="PDB" id="6EA7">
    <property type="method" value="X-ray"/>
    <property type="resolution" value="4.25 A"/>
    <property type="chains" value="A/C/E=32-194"/>
</dbReference>
<dbReference type="PDBsum" id="2Y6S"/>
<dbReference type="PDBsum" id="5F1B"/>
<dbReference type="PDBsum" id="5HJ3"/>
<dbReference type="PDBsum" id="5JNX"/>
<dbReference type="PDBsum" id="5T42"/>
<dbReference type="PDBsum" id="6DZL"/>
<dbReference type="PDBsum" id="6EA7"/>
<dbReference type="BMRB" id="P87666"/>
<dbReference type="EMDB" id="EMD-8935"/>
<dbReference type="SMR" id="P87666"/>
<dbReference type="IntAct" id="P87666">
    <property type="interactions" value="1"/>
</dbReference>
<dbReference type="BindingDB" id="P87666"/>
<dbReference type="DrugCentral" id="P87666"/>
<dbReference type="GlyCosmos" id="P87666">
    <property type="glycosylation" value="17 sites, No reported glycans"/>
</dbReference>
<dbReference type="ABCD" id="P87666">
    <property type="antibodies" value="3 sequenced antibodies"/>
</dbReference>
<dbReference type="EvolutionaryTrace" id="P87666"/>
<dbReference type="Proteomes" id="UP000007208">
    <property type="component" value="Genome"/>
</dbReference>
<dbReference type="GO" id="GO:0005576">
    <property type="term" value="C:extracellular region"/>
    <property type="evidence" value="ECO:0007669"/>
    <property type="project" value="UniProtKB-SubCell"/>
</dbReference>
<dbReference type="GO" id="GO:0020002">
    <property type="term" value="C:host cell plasma membrane"/>
    <property type="evidence" value="ECO:0007669"/>
    <property type="project" value="UniProtKB-SubCell"/>
</dbReference>
<dbReference type="GO" id="GO:0016020">
    <property type="term" value="C:membrane"/>
    <property type="evidence" value="ECO:0007669"/>
    <property type="project" value="UniProtKB-KW"/>
</dbReference>
<dbReference type="GO" id="GO:0019031">
    <property type="term" value="C:viral envelope"/>
    <property type="evidence" value="ECO:0007669"/>
    <property type="project" value="UniProtKB-KW"/>
</dbReference>
<dbReference type="GO" id="GO:0055036">
    <property type="term" value="C:virion membrane"/>
    <property type="evidence" value="ECO:0007669"/>
    <property type="project" value="UniProtKB-SubCell"/>
</dbReference>
<dbReference type="GO" id="GO:0008289">
    <property type="term" value="F:lipid binding"/>
    <property type="evidence" value="ECO:0000269"/>
    <property type="project" value="DisProt"/>
</dbReference>
<dbReference type="GO" id="GO:0075512">
    <property type="term" value="P:clathrin-dependent endocytosis of virus by host cell"/>
    <property type="evidence" value="ECO:0007669"/>
    <property type="project" value="UniProtKB-KW"/>
</dbReference>
<dbReference type="GO" id="GO:0098670">
    <property type="term" value="P:entry receptor-mediated virion attachment to host cell"/>
    <property type="evidence" value="ECO:0007669"/>
    <property type="project" value="UniProtKB-KW"/>
</dbReference>
<dbReference type="GO" id="GO:0039654">
    <property type="term" value="P:fusion of virus membrane with host endosome membrane"/>
    <property type="evidence" value="ECO:0007669"/>
    <property type="project" value="UniProtKB-KW"/>
</dbReference>
<dbReference type="GO" id="GO:0046718">
    <property type="term" value="P:symbiont entry into host cell"/>
    <property type="evidence" value="ECO:0000305"/>
    <property type="project" value="DisProt"/>
</dbReference>
<dbReference type="GO" id="GO:0052170">
    <property type="term" value="P:symbiont-mediated suppression of host innate immune response"/>
    <property type="evidence" value="ECO:0007669"/>
    <property type="project" value="UniProtKB-KW"/>
</dbReference>
<dbReference type="GO" id="GO:0039587">
    <property type="term" value="P:symbiont-mediated-mediated suppression of host tetherin activity"/>
    <property type="evidence" value="ECO:0007669"/>
    <property type="project" value="UniProtKB-KW"/>
</dbReference>
<dbReference type="CDD" id="cd09850">
    <property type="entry name" value="Ebola-like_HR1-HR2"/>
    <property type="match status" value="1"/>
</dbReference>
<dbReference type="FunFam" id="1.10.287.210:FF:000003">
    <property type="entry name" value="Envelope glycoprotein"/>
    <property type="match status" value="1"/>
</dbReference>
<dbReference type="Gene3D" id="1.10.287.210">
    <property type="match status" value="1"/>
</dbReference>
<dbReference type="InterPro" id="IPR054584">
    <property type="entry name" value="Ebola-like_HR1-HR2"/>
</dbReference>
<dbReference type="InterPro" id="IPR014625">
    <property type="entry name" value="GPC_FiloV"/>
</dbReference>
<dbReference type="InterPro" id="IPR002561">
    <property type="entry name" value="GPC_filovir-type_extra_dom"/>
</dbReference>
<dbReference type="Pfam" id="PF22307">
    <property type="entry name" value="Ebola-like_HR1-HR2"/>
    <property type="match status" value="1"/>
</dbReference>
<dbReference type="Pfam" id="PF01611">
    <property type="entry name" value="Filo_glycop"/>
    <property type="match status" value="1"/>
</dbReference>
<dbReference type="PIRSF" id="PIRSF036874">
    <property type="entry name" value="GPC_FiloV"/>
    <property type="match status" value="1"/>
</dbReference>
<dbReference type="SUPFAM" id="SSF58069">
    <property type="entry name" value="Virus ectodomain"/>
    <property type="match status" value="1"/>
</dbReference>
<organismHost>
    <name type="scientific">Epomops franqueti</name>
    <name type="common">Franquet's epauletted fruit bat</name>
    <name type="synonym">Epomophorus franqueti</name>
    <dbReference type="NCBI Taxonomy" id="77231"/>
</organismHost>
<organismHost>
    <name type="scientific">Homo sapiens</name>
    <name type="common">Human</name>
    <dbReference type="NCBI Taxonomy" id="9606"/>
</organismHost>
<organismHost>
    <name type="scientific">Myonycteris torquata</name>
    <name type="common">Little collared fruit bat</name>
    <dbReference type="NCBI Taxonomy" id="77243"/>
</organismHost>
<gene>
    <name type="primary">GP</name>
</gene>
<name>VGP_EBOZ5</name>
<accession>P87666</accession>
<accession>Q6V1Q7</accession>
<protein>
    <recommendedName>
        <fullName>Envelope glycoprotein</fullName>
    </recommendedName>
    <alternativeName>
        <fullName>GP1,2</fullName>
        <shortName>GP</shortName>
    </alternativeName>
    <component>
        <recommendedName>
            <fullName>GP1</fullName>
        </recommendedName>
    </component>
    <component>
        <recommendedName>
            <fullName>GP2</fullName>
        </recommendedName>
    </component>
    <component>
        <recommendedName>
            <fullName>Shed GP</fullName>
        </recommendedName>
        <alternativeName>
            <fullName>GP1,2-delta</fullName>
        </alternativeName>
    </component>
</protein>
<keyword id="KW-0002">3D-structure</keyword>
<keyword id="KW-1165">Clathrin-mediated endocytosis of virus by host</keyword>
<keyword id="KW-0165">Cleavage on pair of basic residues</keyword>
<keyword id="KW-0175">Coiled coil</keyword>
<keyword id="KW-1015">Disulfide bond</keyword>
<keyword id="KW-1170">Fusion of virus membrane with host endosomal membrane</keyword>
<keyword id="KW-1168">Fusion of virus membrane with host membrane</keyword>
<keyword id="KW-0325">Glycoprotein</keyword>
<keyword id="KW-1032">Host cell membrane</keyword>
<keyword id="KW-1043">Host membrane</keyword>
<keyword id="KW-0945">Host-virus interaction</keyword>
<keyword id="KW-1090">Inhibition of host innate immune response by virus</keyword>
<keyword id="KW-1084">Inhibition of host tetherin by virus</keyword>
<keyword id="KW-0449">Lipoprotein</keyword>
<keyword id="KW-0472">Membrane</keyword>
<keyword id="KW-0564">Palmitate</keyword>
<keyword id="KW-0691">RNA editing</keyword>
<keyword id="KW-0964">Secreted</keyword>
<keyword id="KW-0732">Signal</keyword>
<keyword id="KW-0812">Transmembrane</keyword>
<keyword id="KW-1133">Transmembrane helix</keyword>
<keyword id="KW-1161">Viral attachment to host cell</keyword>
<keyword id="KW-1234">Viral attachment to host entry receptor</keyword>
<keyword id="KW-0261">Viral envelope protein</keyword>
<keyword id="KW-0899">Viral immunoevasion</keyword>
<keyword id="KW-1162">Viral penetration into host cytoplasm</keyword>
<keyword id="KW-0946">Virion</keyword>
<keyword id="KW-1164">Virus endocytosis by host</keyword>
<keyword id="KW-1160">Virus entry into host cell</keyword>
<evidence type="ECO:0000250" key="1"/>
<evidence type="ECO:0000250" key="2">
    <source>
        <dbReference type="UniProtKB" id="O11457"/>
    </source>
</evidence>
<evidence type="ECO:0000250" key="3">
    <source>
        <dbReference type="UniProtKB" id="Q05320"/>
    </source>
</evidence>
<evidence type="ECO:0000250" key="4">
    <source>
        <dbReference type="UniProtKB" id="Q66814"/>
    </source>
</evidence>
<evidence type="ECO:0000255" key="5"/>
<evidence type="ECO:0000256" key="6">
    <source>
        <dbReference type="SAM" id="MobiDB-lite"/>
    </source>
</evidence>
<evidence type="ECO:0000269" key="7">
    <source>
    </source>
</evidence>
<evidence type="ECO:0000305" key="8"/>
<evidence type="ECO:0007829" key="9">
    <source>
        <dbReference type="PDB" id="5F1B"/>
    </source>
</evidence>
<evidence type="ECO:0007829" key="10">
    <source>
        <dbReference type="PDB" id="5HJ3"/>
    </source>
</evidence>
<evidence type="ECO:0007829" key="11">
    <source>
        <dbReference type="PDB" id="5T42"/>
    </source>
</evidence>